<sequence>MSAVLSPKLIDGKAAAARVLAEVTEDVRTLKAAGIKPALAVVLVGDDPASQVYVRNKVLRAEECGIRSLEHKLPADTAEADLLALIHSLNADYSVHGILVQLPLPAHIDETRVLQAINPLKDVDGFHAENVGGLSQGRDVLTPCTPAGCLRLLQDSCGDLTGKHAVVIGRSNIVGKPMAALLLKAHCSVSVVHSKSANLRELCRQADIVVAAVGKPRLVDADWLKPGAVVIDVGINRIDEGGRSRLVGDVDFDSALTRAAAITPVPGGVGPMTIAFLMKNTLVAARLQHPATGLPLSTLENPA</sequence>
<reference key="1">
    <citation type="submission" date="2007-04" db="EMBL/GenBank/DDBJ databases">
        <title>Complete sequence of Pseudomonas mendocina ymp.</title>
        <authorList>
            <consortium name="US DOE Joint Genome Institute"/>
            <person name="Copeland A."/>
            <person name="Lucas S."/>
            <person name="Lapidus A."/>
            <person name="Barry K."/>
            <person name="Glavina del Rio T."/>
            <person name="Dalin E."/>
            <person name="Tice H."/>
            <person name="Pitluck S."/>
            <person name="Kiss H."/>
            <person name="Brettin T."/>
            <person name="Detter J.C."/>
            <person name="Bruce D."/>
            <person name="Han C."/>
            <person name="Schmutz J."/>
            <person name="Larimer F."/>
            <person name="Land M."/>
            <person name="Hauser L."/>
            <person name="Kyrpides N."/>
            <person name="Mikhailova N."/>
            <person name="Hersman L."/>
            <person name="Dubois J."/>
            <person name="Maurice P."/>
            <person name="Richardson P."/>
        </authorList>
    </citation>
    <scope>NUCLEOTIDE SEQUENCE [LARGE SCALE GENOMIC DNA]</scope>
    <source>
        <strain>ymp</strain>
    </source>
</reference>
<comment type="function">
    <text evidence="1">Catalyzes the oxidation of 5,10-methylenetetrahydrofolate to 5,10-methenyltetrahydrofolate and then the hydrolysis of 5,10-methenyltetrahydrofolate to 10-formyltetrahydrofolate.</text>
</comment>
<comment type="catalytic activity">
    <reaction evidence="1">
        <text>(6R)-5,10-methylene-5,6,7,8-tetrahydrofolate + NADP(+) = (6R)-5,10-methenyltetrahydrofolate + NADPH</text>
        <dbReference type="Rhea" id="RHEA:22812"/>
        <dbReference type="ChEBI" id="CHEBI:15636"/>
        <dbReference type="ChEBI" id="CHEBI:57455"/>
        <dbReference type="ChEBI" id="CHEBI:57783"/>
        <dbReference type="ChEBI" id="CHEBI:58349"/>
        <dbReference type="EC" id="1.5.1.5"/>
    </reaction>
</comment>
<comment type="catalytic activity">
    <reaction evidence="1">
        <text>(6R)-5,10-methenyltetrahydrofolate + H2O = (6R)-10-formyltetrahydrofolate + H(+)</text>
        <dbReference type="Rhea" id="RHEA:23700"/>
        <dbReference type="ChEBI" id="CHEBI:15377"/>
        <dbReference type="ChEBI" id="CHEBI:15378"/>
        <dbReference type="ChEBI" id="CHEBI:57455"/>
        <dbReference type="ChEBI" id="CHEBI:195366"/>
        <dbReference type="EC" id="3.5.4.9"/>
    </reaction>
</comment>
<comment type="pathway">
    <text evidence="1">One-carbon metabolism; tetrahydrofolate interconversion.</text>
</comment>
<comment type="subunit">
    <text evidence="1">Homodimer.</text>
</comment>
<comment type="similarity">
    <text evidence="1">Belongs to the tetrahydrofolate dehydrogenase/cyclohydrolase family.</text>
</comment>
<evidence type="ECO:0000255" key="1">
    <source>
        <dbReference type="HAMAP-Rule" id="MF_01576"/>
    </source>
</evidence>
<protein>
    <recommendedName>
        <fullName evidence="1">Bifunctional protein FolD 2</fullName>
    </recommendedName>
    <domain>
        <recommendedName>
            <fullName evidence="1">Methylenetetrahydrofolate dehydrogenase</fullName>
            <ecNumber evidence="1">1.5.1.5</ecNumber>
        </recommendedName>
    </domain>
    <domain>
        <recommendedName>
            <fullName evidence="1">Methenyltetrahydrofolate cyclohydrolase</fullName>
            <ecNumber evidence="1">3.5.4.9</ecNumber>
        </recommendedName>
    </domain>
</protein>
<gene>
    <name evidence="1" type="primary">folD2</name>
    <name type="ordered locus">Pmen_3458</name>
</gene>
<keyword id="KW-0028">Amino-acid biosynthesis</keyword>
<keyword id="KW-0368">Histidine biosynthesis</keyword>
<keyword id="KW-0378">Hydrolase</keyword>
<keyword id="KW-0486">Methionine biosynthesis</keyword>
<keyword id="KW-0511">Multifunctional enzyme</keyword>
<keyword id="KW-0521">NADP</keyword>
<keyword id="KW-0554">One-carbon metabolism</keyword>
<keyword id="KW-0560">Oxidoreductase</keyword>
<keyword id="KW-0658">Purine biosynthesis</keyword>
<proteinExistence type="inferred from homology"/>
<organism>
    <name type="scientific">Ectopseudomonas mendocina (strain ymp)</name>
    <name type="common">Pseudomonas mendocina</name>
    <dbReference type="NCBI Taxonomy" id="399739"/>
    <lineage>
        <taxon>Bacteria</taxon>
        <taxon>Pseudomonadati</taxon>
        <taxon>Pseudomonadota</taxon>
        <taxon>Gammaproteobacteria</taxon>
        <taxon>Pseudomonadales</taxon>
        <taxon>Pseudomonadaceae</taxon>
        <taxon>Ectopseudomonas</taxon>
    </lineage>
</organism>
<name>FOLD2_ECTM1</name>
<feature type="chain" id="PRO_0000340588" description="Bifunctional protein FolD 2">
    <location>
        <begin position="1"/>
        <end position="303"/>
    </location>
</feature>
<feature type="binding site" evidence="1">
    <location>
        <begin position="169"/>
        <end position="171"/>
    </location>
    <ligand>
        <name>NADP(+)</name>
        <dbReference type="ChEBI" id="CHEBI:58349"/>
    </ligand>
</feature>
<feature type="binding site" evidence="1">
    <location>
        <position position="194"/>
    </location>
    <ligand>
        <name>NADP(+)</name>
        <dbReference type="ChEBI" id="CHEBI:58349"/>
    </ligand>
</feature>
<feature type="binding site" evidence="1">
    <location>
        <position position="235"/>
    </location>
    <ligand>
        <name>NADP(+)</name>
        <dbReference type="ChEBI" id="CHEBI:58349"/>
    </ligand>
</feature>
<accession>A4XXZ2</accession>
<dbReference type="EC" id="1.5.1.5" evidence="1"/>
<dbReference type="EC" id="3.5.4.9" evidence="1"/>
<dbReference type="EMBL" id="CP000680">
    <property type="protein sequence ID" value="ABP86208.1"/>
    <property type="molecule type" value="Genomic_DNA"/>
</dbReference>
<dbReference type="SMR" id="A4XXZ2"/>
<dbReference type="STRING" id="399739.Pmen_3458"/>
<dbReference type="KEGG" id="pmy:Pmen_3458"/>
<dbReference type="eggNOG" id="COG0190">
    <property type="taxonomic scope" value="Bacteria"/>
</dbReference>
<dbReference type="HOGENOM" id="CLU_034045_2_1_6"/>
<dbReference type="OrthoDB" id="9803580at2"/>
<dbReference type="UniPathway" id="UPA00193"/>
<dbReference type="GO" id="GO:0005829">
    <property type="term" value="C:cytosol"/>
    <property type="evidence" value="ECO:0007669"/>
    <property type="project" value="TreeGrafter"/>
</dbReference>
<dbReference type="GO" id="GO:0004477">
    <property type="term" value="F:methenyltetrahydrofolate cyclohydrolase activity"/>
    <property type="evidence" value="ECO:0007669"/>
    <property type="project" value="UniProtKB-UniRule"/>
</dbReference>
<dbReference type="GO" id="GO:0004488">
    <property type="term" value="F:methylenetetrahydrofolate dehydrogenase (NADP+) activity"/>
    <property type="evidence" value="ECO:0007669"/>
    <property type="project" value="UniProtKB-UniRule"/>
</dbReference>
<dbReference type="GO" id="GO:0000105">
    <property type="term" value="P:L-histidine biosynthetic process"/>
    <property type="evidence" value="ECO:0007669"/>
    <property type="project" value="UniProtKB-KW"/>
</dbReference>
<dbReference type="GO" id="GO:0009086">
    <property type="term" value="P:methionine biosynthetic process"/>
    <property type="evidence" value="ECO:0007669"/>
    <property type="project" value="UniProtKB-KW"/>
</dbReference>
<dbReference type="GO" id="GO:0006164">
    <property type="term" value="P:purine nucleotide biosynthetic process"/>
    <property type="evidence" value="ECO:0007669"/>
    <property type="project" value="UniProtKB-KW"/>
</dbReference>
<dbReference type="GO" id="GO:0035999">
    <property type="term" value="P:tetrahydrofolate interconversion"/>
    <property type="evidence" value="ECO:0007669"/>
    <property type="project" value="UniProtKB-UniRule"/>
</dbReference>
<dbReference type="CDD" id="cd01080">
    <property type="entry name" value="NAD_bind_m-THF_DH_Cyclohyd"/>
    <property type="match status" value="1"/>
</dbReference>
<dbReference type="FunFam" id="3.40.50.720:FF:000006">
    <property type="entry name" value="Bifunctional protein FolD"/>
    <property type="match status" value="1"/>
</dbReference>
<dbReference type="FunFam" id="3.40.50.10860:FF:000005">
    <property type="entry name" value="C-1-tetrahydrofolate synthase, cytoplasmic, putative"/>
    <property type="match status" value="1"/>
</dbReference>
<dbReference type="Gene3D" id="3.40.50.10860">
    <property type="entry name" value="Leucine Dehydrogenase, chain A, domain 1"/>
    <property type="match status" value="1"/>
</dbReference>
<dbReference type="Gene3D" id="3.40.50.720">
    <property type="entry name" value="NAD(P)-binding Rossmann-like Domain"/>
    <property type="match status" value="1"/>
</dbReference>
<dbReference type="HAMAP" id="MF_01576">
    <property type="entry name" value="THF_DHG_CYH"/>
    <property type="match status" value="1"/>
</dbReference>
<dbReference type="InterPro" id="IPR046346">
    <property type="entry name" value="Aminoacid_DH-like_N_sf"/>
</dbReference>
<dbReference type="InterPro" id="IPR036291">
    <property type="entry name" value="NAD(P)-bd_dom_sf"/>
</dbReference>
<dbReference type="InterPro" id="IPR000672">
    <property type="entry name" value="THF_DH/CycHdrlase"/>
</dbReference>
<dbReference type="InterPro" id="IPR020630">
    <property type="entry name" value="THF_DH/CycHdrlase_cat_dom"/>
</dbReference>
<dbReference type="InterPro" id="IPR020867">
    <property type="entry name" value="THF_DH/CycHdrlase_CS"/>
</dbReference>
<dbReference type="InterPro" id="IPR020631">
    <property type="entry name" value="THF_DH/CycHdrlase_NAD-bd_dom"/>
</dbReference>
<dbReference type="NCBIfam" id="NF008058">
    <property type="entry name" value="PRK10792.1"/>
    <property type="match status" value="1"/>
</dbReference>
<dbReference type="NCBIfam" id="NF010783">
    <property type="entry name" value="PRK14186.1"/>
    <property type="match status" value="1"/>
</dbReference>
<dbReference type="NCBIfam" id="NF010785">
    <property type="entry name" value="PRK14188.1"/>
    <property type="match status" value="1"/>
</dbReference>
<dbReference type="NCBIfam" id="NF010790">
    <property type="entry name" value="PRK14194.1"/>
    <property type="match status" value="1"/>
</dbReference>
<dbReference type="PANTHER" id="PTHR48099:SF5">
    <property type="entry name" value="C-1-TETRAHYDROFOLATE SYNTHASE, CYTOPLASMIC"/>
    <property type="match status" value="1"/>
</dbReference>
<dbReference type="PANTHER" id="PTHR48099">
    <property type="entry name" value="C-1-TETRAHYDROFOLATE SYNTHASE, CYTOPLASMIC-RELATED"/>
    <property type="match status" value="1"/>
</dbReference>
<dbReference type="Pfam" id="PF00763">
    <property type="entry name" value="THF_DHG_CYH"/>
    <property type="match status" value="1"/>
</dbReference>
<dbReference type="Pfam" id="PF02882">
    <property type="entry name" value="THF_DHG_CYH_C"/>
    <property type="match status" value="1"/>
</dbReference>
<dbReference type="PRINTS" id="PR00085">
    <property type="entry name" value="THFDHDRGNASE"/>
</dbReference>
<dbReference type="SUPFAM" id="SSF53223">
    <property type="entry name" value="Aminoacid dehydrogenase-like, N-terminal domain"/>
    <property type="match status" value="1"/>
</dbReference>
<dbReference type="SUPFAM" id="SSF51735">
    <property type="entry name" value="NAD(P)-binding Rossmann-fold domains"/>
    <property type="match status" value="1"/>
</dbReference>
<dbReference type="PROSITE" id="PS00766">
    <property type="entry name" value="THF_DHG_CYH_1"/>
    <property type="match status" value="1"/>
</dbReference>
<dbReference type="PROSITE" id="PS00767">
    <property type="entry name" value="THF_DHG_CYH_2"/>
    <property type="match status" value="1"/>
</dbReference>